<accession>Q11HL6</accession>
<name>AROQ_CHESB</name>
<dbReference type="EC" id="4.2.1.10" evidence="1"/>
<dbReference type="EMBL" id="CP000390">
    <property type="protein sequence ID" value="ABG63109.1"/>
    <property type="molecule type" value="Genomic_DNA"/>
</dbReference>
<dbReference type="SMR" id="Q11HL6"/>
<dbReference type="STRING" id="266779.Meso_1714"/>
<dbReference type="KEGG" id="mes:Meso_1714"/>
<dbReference type="eggNOG" id="COG0757">
    <property type="taxonomic scope" value="Bacteria"/>
</dbReference>
<dbReference type="HOGENOM" id="CLU_090968_2_0_5"/>
<dbReference type="OrthoDB" id="9790793at2"/>
<dbReference type="UniPathway" id="UPA00053">
    <property type="reaction ID" value="UER00086"/>
</dbReference>
<dbReference type="GO" id="GO:0003855">
    <property type="term" value="F:3-dehydroquinate dehydratase activity"/>
    <property type="evidence" value="ECO:0007669"/>
    <property type="project" value="UniProtKB-UniRule"/>
</dbReference>
<dbReference type="GO" id="GO:0008652">
    <property type="term" value="P:amino acid biosynthetic process"/>
    <property type="evidence" value="ECO:0007669"/>
    <property type="project" value="UniProtKB-KW"/>
</dbReference>
<dbReference type="GO" id="GO:0009073">
    <property type="term" value="P:aromatic amino acid family biosynthetic process"/>
    <property type="evidence" value="ECO:0007669"/>
    <property type="project" value="UniProtKB-KW"/>
</dbReference>
<dbReference type="GO" id="GO:0009423">
    <property type="term" value="P:chorismate biosynthetic process"/>
    <property type="evidence" value="ECO:0007669"/>
    <property type="project" value="UniProtKB-UniRule"/>
</dbReference>
<dbReference type="GO" id="GO:0019631">
    <property type="term" value="P:quinate catabolic process"/>
    <property type="evidence" value="ECO:0007669"/>
    <property type="project" value="TreeGrafter"/>
</dbReference>
<dbReference type="CDD" id="cd00466">
    <property type="entry name" value="DHQase_II"/>
    <property type="match status" value="1"/>
</dbReference>
<dbReference type="Gene3D" id="3.40.50.9100">
    <property type="entry name" value="Dehydroquinase, class II"/>
    <property type="match status" value="1"/>
</dbReference>
<dbReference type="HAMAP" id="MF_00169">
    <property type="entry name" value="AroQ"/>
    <property type="match status" value="1"/>
</dbReference>
<dbReference type="InterPro" id="IPR001874">
    <property type="entry name" value="DHquinase_II"/>
</dbReference>
<dbReference type="InterPro" id="IPR018509">
    <property type="entry name" value="DHquinase_II_CS"/>
</dbReference>
<dbReference type="InterPro" id="IPR036441">
    <property type="entry name" value="DHquinase_II_sf"/>
</dbReference>
<dbReference type="NCBIfam" id="TIGR01088">
    <property type="entry name" value="aroQ"/>
    <property type="match status" value="1"/>
</dbReference>
<dbReference type="NCBIfam" id="NF003805">
    <property type="entry name" value="PRK05395.1-2"/>
    <property type="match status" value="1"/>
</dbReference>
<dbReference type="NCBIfam" id="NF003806">
    <property type="entry name" value="PRK05395.1-3"/>
    <property type="match status" value="1"/>
</dbReference>
<dbReference type="NCBIfam" id="NF003807">
    <property type="entry name" value="PRK05395.1-4"/>
    <property type="match status" value="1"/>
</dbReference>
<dbReference type="PANTHER" id="PTHR21272">
    <property type="entry name" value="CATABOLIC 3-DEHYDROQUINASE"/>
    <property type="match status" value="1"/>
</dbReference>
<dbReference type="PANTHER" id="PTHR21272:SF3">
    <property type="entry name" value="CATABOLIC 3-DEHYDROQUINASE"/>
    <property type="match status" value="1"/>
</dbReference>
<dbReference type="Pfam" id="PF01220">
    <property type="entry name" value="DHquinase_II"/>
    <property type="match status" value="1"/>
</dbReference>
<dbReference type="PIRSF" id="PIRSF001399">
    <property type="entry name" value="DHquinase_II"/>
    <property type="match status" value="1"/>
</dbReference>
<dbReference type="SUPFAM" id="SSF52304">
    <property type="entry name" value="Type II 3-dehydroquinate dehydratase"/>
    <property type="match status" value="1"/>
</dbReference>
<dbReference type="PROSITE" id="PS01029">
    <property type="entry name" value="DEHYDROQUINASE_II"/>
    <property type="match status" value="1"/>
</dbReference>
<proteinExistence type="inferred from homology"/>
<comment type="function">
    <text evidence="1">Catalyzes a trans-dehydration via an enolate intermediate.</text>
</comment>
<comment type="catalytic activity">
    <reaction evidence="1">
        <text>3-dehydroquinate = 3-dehydroshikimate + H2O</text>
        <dbReference type="Rhea" id="RHEA:21096"/>
        <dbReference type="ChEBI" id="CHEBI:15377"/>
        <dbReference type="ChEBI" id="CHEBI:16630"/>
        <dbReference type="ChEBI" id="CHEBI:32364"/>
        <dbReference type="EC" id="4.2.1.10"/>
    </reaction>
</comment>
<comment type="pathway">
    <text evidence="1">Metabolic intermediate biosynthesis; chorismate biosynthesis; chorismate from D-erythrose 4-phosphate and phosphoenolpyruvate: step 3/7.</text>
</comment>
<comment type="subunit">
    <text evidence="1">Homododecamer.</text>
</comment>
<comment type="similarity">
    <text evidence="1">Belongs to the type-II 3-dehydroquinase family.</text>
</comment>
<protein>
    <recommendedName>
        <fullName evidence="1">3-dehydroquinate dehydratase</fullName>
        <shortName evidence="1">3-dehydroquinase</shortName>
        <ecNumber evidence="1">4.2.1.10</ecNumber>
    </recommendedName>
    <alternativeName>
        <fullName evidence="1">Type II DHQase</fullName>
    </alternativeName>
</protein>
<keyword id="KW-0028">Amino-acid biosynthesis</keyword>
<keyword id="KW-0057">Aromatic amino acid biosynthesis</keyword>
<keyword id="KW-0456">Lyase</keyword>
<organism>
    <name type="scientific">Chelativorans sp. (strain BNC1)</name>
    <dbReference type="NCBI Taxonomy" id="266779"/>
    <lineage>
        <taxon>Bacteria</taxon>
        <taxon>Pseudomonadati</taxon>
        <taxon>Pseudomonadota</taxon>
        <taxon>Alphaproteobacteria</taxon>
        <taxon>Hyphomicrobiales</taxon>
        <taxon>Phyllobacteriaceae</taxon>
        <taxon>Chelativorans</taxon>
    </lineage>
</organism>
<feature type="chain" id="PRO_1000023483" description="3-dehydroquinate dehydratase">
    <location>
        <begin position="1"/>
        <end position="145"/>
    </location>
</feature>
<feature type="active site" description="Proton acceptor" evidence="1">
    <location>
        <position position="24"/>
    </location>
</feature>
<feature type="active site" description="Proton donor" evidence="1">
    <location>
        <position position="102"/>
    </location>
</feature>
<feature type="binding site" evidence="1">
    <location>
        <position position="75"/>
    </location>
    <ligand>
        <name>substrate</name>
    </ligand>
</feature>
<feature type="binding site" evidence="1">
    <location>
        <position position="81"/>
    </location>
    <ligand>
        <name>substrate</name>
    </ligand>
</feature>
<feature type="binding site" evidence="1">
    <location>
        <position position="88"/>
    </location>
    <ligand>
        <name>substrate</name>
    </ligand>
</feature>
<feature type="binding site" evidence="1">
    <location>
        <begin position="103"/>
        <end position="104"/>
    </location>
    <ligand>
        <name>substrate</name>
    </ligand>
</feature>
<feature type="binding site" evidence="1">
    <location>
        <position position="113"/>
    </location>
    <ligand>
        <name>substrate</name>
    </ligand>
</feature>
<feature type="site" description="Transition state stabilizer" evidence="1">
    <location>
        <position position="19"/>
    </location>
</feature>
<sequence>MAKTVYVLNGPNLNTLGKREPGIYGGKTLADIEADCRAAAAGLGLEVEFRQSNHEGMLIDWIHEAGERGAGIVLNPGAYGHTSIALHDAIRAVSPLPVIEVHLSNIHAREPFRHRTMTAPVVAGMICGLGPIGYTLALQALAARL</sequence>
<evidence type="ECO:0000255" key="1">
    <source>
        <dbReference type="HAMAP-Rule" id="MF_00169"/>
    </source>
</evidence>
<reference key="1">
    <citation type="submission" date="2006-06" db="EMBL/GenBank/DDBJ databases">
        <title>Complete sequence of chromosome of Mesorhizobium sp. BNC1.</title>
        <authorList>
            <consortium name="US DOE Joint Genome Institute"/>
            <person name="Copeland A."/>
            <person name="Lucas S."/>
            <person name="Lapidus A."/>
            <person name="Barry K."/>
            <person name="Detter J.C."/>
            <person name="Glavina del Rio T."/>
            <person name="Hammon N."/>
            <person name="Israni S."/>
            <person name="Dalin E."/>
            <person name="Tice H."/>
            <person name="Pitluck S."/>
            <person name="Chertkov O."/>
            <person name="Brettin T."/>
            <person name="Bruce D."/>
            <person name="Han C."/>
            <person name="Tapia R."/>
            <person name="Gilna P."/>
            <person name="Schmutz J."/>
            <person name="Larimer F."/>
            <person name="Land M."/>
            <person name="Hauser L."/>
            <person name="Kyrpides N."/>
            <person name="Mikhailova N."/>
            <person name="Richardson P."/>
        </authorList>
    </citation>
    <scope>NUCLEOTIDE SEQUENCE [LARGE SCALE GENOMIC DNA]</scope>
    <source>
        <strain>BNC1</strain>
    </source>
</reference>
<gene>
    <name evidence="1" type="primary">aroQ</name>
    <name type="ordered locus">Meso_1714</name>
</gene>